<feature type="chain" id="PRO_0000194630" description="Uncharacterized HTH-type transcriptional regulator SAR0107">
    <location>
        <begin position="1"/>
        <end position="745"/>
    </location>
</feature>
<feature type="domain" description="HTH araC/xylS-type" evidence="1">
    <location>
        <begin position="158"/>
        <end position="256"/>
    </location>
</feature>
<feature type="DNA-binding region" description="H-T-H motif" evidence="1">
    <location>
        <begin position="175"/>
        <end position="196"/>
    </location>
</feature>
<feature type="DNA-binding region" description="H-T-H motif" evidence="1">
    <location>
        <begin position="223"/>
        <end position="246"/>
    </location>
</feature>
<dbReference type="EMBL" id="BX571856">
    <property type="protein sequence ID" value="CAG39133.1"/>
    <property type="molecule type" value="Genomic_DNA"/>
</dbReference>
<dbReference type="SMR" id="Q6GKK1"/>
<dbReference type="KEGG" id="sar:SAR0107"/>
<dbReference type="HOGENOM" id="CLU_017624_1_0_9"/>
<dbReference type="Proteomes" id="UP000000596">
    <property type="component" value="Chromosome"/>
</dbReference>
<dbReference type="GO" id="GO:0003700">
    <property type="term" value="F:DNA-binding transcription factor activity"/>
    <property type="evidence" value="ECO:0007669"/>
    <property type="project" value="InterPro"/>
</dbReference>
<dbReference type="GO" id="GO:0043565">
    <property type="term" value="F:sequence-specific DNA binding"/>
    <property type="evidence" value="ECO:0007669"/>
    <property type="project" value="InterPro"/>
</dbReference>
<dbReference type="Gene3D" id="3.20.20.80">
    <property type="entry name" value="Glycosidases"/>
    <property type="match status" value="1"/>
</dbReference>
<dbReference type="Gene3D" id="2.60.40.1500">
    <property type="entry name" value="Glycosyl hydrolase domain, family 39"/>
    <property type="match status" value="1"/>
</dbReference>
<dbReference type="Gene3D" id="1.10.10.60">
    <property type="entry name" value="Homeodomain-like"/>
    <property type="match status" value="2"/>
</dbReference>
<dbReference type="InterPro" id="IPR017853">
    <property type="entry name" value="Glycoside_hydrolase_SF"/>
</dbReference>
<dbReference type="InterPro" id="IPR009057">
    <property type="entry name" value="Homeodomain-like_sf"/>
</dbReference>
<dbReference type="InterPro" id="IPR037923">
    <property type="entry name" value="HTH-like"/>
</dbReference>
<dbReference type="InterPro" id="IPR018060">
    <property type="entry name" value="HTH_AraC"/>
</dbReference>
<dbReference type="InterPro" id="IPR020449">
    <property type="entry name" value="Tscrpt_reg_AraC-type_HTH"/>
</dbReference>
<dbReference type="NCBIfam" id="NF047455">
    <property type="entry name" value="TF_Staph_AryK"/>
    <property type="match status" value="1"/>
</dbReference>
<dbReference type="PANTHER" id="PTHR43280">
    <property type="entry name" value="ARAC-FAMILY TRANSCRIPTIONAL REGULATOR"/>
    <property type="match status" value="1"/>
</dbReference>
<dbReference type="PANTHER" id="PTHR43280:SF28">
    <property type="entry name" value="HTH-TYPE TRANSCRIPTIONAL ACTIVATOR RHAS"/>
    <property type="match status" value="1"/>
</dbReference>
<dbReference type="Pfam" id="PF12833">
    <property type="entry name" value="HTH_18"/>
    <property type="match status" value="1"/>
</dbReference>
<dbReference type="PRINTS" id="PR00032">
    <property type="entry name" value="HTHARAC"/>
</dbReference>
<dbReference type="SMART" id="SM00342">
    <property type="entry name" value="HTH_ARAC"/>
    <property type="match status" value="1"/>
</dbReference>
<dbReference type="SUPFAM" id="SSF51445">
    <property type="entry name" value="(Trans)glycosidases"/>
    <property type="match status" value="1"/>
</dbReference>
<dbReference type="SUPFAM" id="SSF51011">
    <property type="entry name" value="Glycosyl hydrolase domain"/>
    <property type="match status" value="1"/>
</dbReference>
<dbReference type="SUPFAM" id="SSF46689">
    <property type="entry name" value="Homeodomain-like"/>
    <property type="match status" value="2"/>
</dbReference>
<dbReference type="SUPFAM" id="SSF51215">
    <property type="entry name" value="Regulatory protein AraC"/>
    <property type="match status" value="1"/>
</dbReference>
<dbReference type="PROSITE" id="PS01124">
    <property type="entry name" value="HTH_ARAC_FAMILY_2"/>
    <property type="match status" value="1"/>
</dbReference>
<accession>Q6GKK1</accession>
<proteinExistence type="predicted"/>
<organism>
    <name type="scientific">Staphylococcus aureus (strain MRSA252)</name>
    <dbReference type="NCBI Taxonomy" id="282458"/>
    <lineage>
        <taxon>Bacteria</taxon>
        <taxon>Bacillati</taxon>
        <taxon>Bacillota</taxon>
        <taxon>Bacilli</taxon>
        <taxon>Bacillales</taxon>
        <taxon>Staphylococcaceae</taxon>
        <taxon>Staphylococcus</taxon>
    </lineage>
</organism>
<protein>
    <recommendedName>
        <fullName>Uncharacterized HTH-type transcriptional regulator SAR0107</fullName>
    </recommendedName>
</protein>
<name>Y107_STAAR</name>
<keyword id="KW-0238">DNA-binding</keyword>
<keyword id="KW-0677">Repeat</keyword>
<keyword id="KW-0804">Transcription</keyword>
<keyword id="KW-0805">Transcription regulation</keyword>
<evidence type="ECO:0000255" key="1">
    <source>
        <dbReference type="PROSITE-ProRule" id="PRU00593"/>
    </source>
</evidence>
<gene>
    <name type="ordered locus">SAR0107</name>
</gene>
<sequence length="745" mass="87812">MQRDYLIRVETESMLDFKRLNGLMIGFVIKGEAHIYDENNMTQCNSGDIFIINHRDLYRFQLQQDGIICYIQFQMKYLADKFDDVHCLYFHLTDATTTKNIHQLRNIMARLVSTHIRHNELSKLTEQQLVIQLLMHMIHYVPRTYHSNQSILNDDKVNQVCDYIELHFHEDLSLSELSEYVGWSESHLSKKFAESLGVGFQHFLNTTRIEHAKLDLTYTDETITDIALQNGFSSAASFARTFKHFTHQTPKQYRGDRPAITENQQSAQHNYHDRELILLLNDYIEEMNHFIEDIEKVNYKEITFQPTNHQLNQFNHIIQVGYLRNLLNTQYQSQLLTCHSDFQVNEVLAYDVMPYIMKKLNAPFTYDAEISNIFYDIDLCLDFLLDHNFSLTMHLNQYDSRDYIDAFKVFIHHVALHVSHRKDLKFNLYVTTLHNSLIEMIDYFKALFPNGGLYVHLDQATERHLPLLKRLEPHIDHFVFDANSNDAVDFNKMNDDEFKTASQMIINKTNYLIDLMHRHHLKRPLILLNWNTLTGDTFITNGEYFRGGIIIEQLLKLSSKVEGIGYWLNYDLHVSHCKNERDYMNSIELFHQYNGKRPVYFTALLFNKLTSNILYSDDTCIVTGTDSNFQILLYDAKHFNPYLALDNQMNMRATEMIHLNINALEEGIYKIKHFTLDKENGALFNLWRKHHTIHGMDKDSIDYVNRMSFPKLEVYDIDVTDTLALNIKMITNGIHLIEVKRYPSS</sequence>
<reference key="1">
    <citation type="journal article" date="2004" name="Proc. Natl. Acad. Sci. U.S.A.">
        <title>Complete genomes of two clinical Staphylococcus aureus strains: evidence for the rapid evolution of virulence and drug resistance.</title>
        <authorList>
            <person name="Holden M.T.G."/>
            <person name="Feil E.J."/>
            <person name="Lindsay J.A."/>
            <person name="Peacock S.J."/>
            <person name="Day N.P.J."/>
            <person name="Enright M.C."/>
            <person name="Foster T.J."/>
            <person name="Moore C.E."/>
            <person name="Hurst L."/>
            <person name="Atkin R."/>
            <person name="Barron A."/>
            <person name="Bason N."/>
            <person name="Bentley S.D."/>
            <person name="Chillingworth C."/>
            <person name="Chillingworth T."/>
            <person name="Churcher C."/>
            <person name="Clark L."/>
            <person name="Corton C."/>
            <person name="Cronin A."/>
            <person name="Doggett J."/>
            <person name="Dowd L."/>
            <person name="Feltwell T."/>
            <person name="Hance Z."/>
            <person name="Harris B."/>
            <person name="Hauser H."/>
            <person name="Holroyd S."/>
            <person name="Jagels K."/>
            <person name="James K.D."/>
            <person name="Lennard N."/>
            <person name="Line A."/>
            <person name="Mayes R."/>
            <person name="Moule S."/>
            <person name="Mungall K."/>
            <person name="Ormond D."/>
            <person name="Quail M.A."/>
            <person name="Rabbinowitsch E."/>
            <person name="Rutherford K.M."/>
            <person name="Sanders M."/>
            <person name="Sharp S."/>
            <person name="Simmonds M."/>
            <person name="Stevens K."/>
            <person name="Whitehead S."/>
            <person name="Barrell B.G."/>
            <person name="Spratt B.G."/>
            <person name="Parkhill J."/>
        </authorList>
    </citation>
    <scope>NUCLEOTIDE SEQUENCE [LARGE SCALE GENOMIC DNA]</scope>
    <source>
        <strain>MRSA252</strain>
    </source>
</reference>